<dbReference type="EC" id="6.1.1.21" evidence="1"/>
<dbReference type="EMBL" id="CP000030">
    <property type="protein sequence ID" value="AAV86280.1"/>
    <property type="molecule type" value="Genomic_DNA"/>
</dbReference>
<dbReference type="RefSeq" id="WP_011114132.1">
    <property type="nucleotide sequence ID" value="NC_004842.2"/>
</dbReference>
<dbReference type="SMR" id="Q5PBP9"/>
<dbReference type="KEGG" id="ama:AM138"/>
<dbReference type="HOGENOM" id="CLU_025113_1_0_5"/>
<dbReference type="GO" id="GO:0005737">
    <property type="term" value="C:cytoplasm"/>
    <property type="evidence" value="ECO:0007669"/>
    <property type="project" value="UniProtKB-SubCell"/>
</dbReference>
<dbReference type="GO" id="GO:0005524">
    <property type="term" value="F:ATP binding"/>
    <property type="evidence" value="ECO:0007669"/>
    <property type="project" value="UniProtKB-UniRule"/>
</dbReference>
<dbReference type="GO" id="GO:0004821">
    <property type="term" value="F:histidine-tRNA ligase activity"/>
    <property type="evidence" value="ECO:0007669"/>
    <property type="project" value="UniProtKB-UniRule"/>
</dbReference>
<dbReference type="GO" id="GO:0006427">
    <property type="term" value="P:histidyl-tRNA aminoacylation"/>
    <property type="evidence" value="ECO:0007669"/>
    <property type="project" value="UniProtKB-UniRule"/>
</dbReference>
<dbReference type="CDD" id="cd00773">
    <property type="entry name" value="HisRS-like_core"/>
    <property type="match status" value="1"/>
</dbReference>
<dbReference type="Gene3D" id="3.40.50.800">
    <property type="entry name" value="Anticodon-binding domain"/>
    <property type="match status" value="1"/>
</dbReference>
<dbReference type="Gene3D" id="3.30.930.10">
    <property type="entry name" value="Bira Bifunctional Protein, Domain 2"/>
    <property type="match status" value="1"/>
</dbReference>
<dbReference type="HAMAP" id="MF_00127">
    <property type="entry name" value="His_tRNA_synth"/>
    <property type="match status" value="1"/>
</dbReference>
<dbReference type="InterPro" id="IPR006195">
    <property type="entry name" value="aa-tRNA-synth_II"/>
</dbReference>
<dbReference type="InterPro" id="IPR045864">
    <property type="entry name" value="aa-tRNA-synth_II/BPL/LPL"/>
</dbReference>
<dbReference type="InterPro" id="IPR004154">
    <property type="entry name" value="Anticodon-bd"/>
</dbReference>
<dbReference type="InterPro" id="IPR036621">
    <property type="entry name" value="Anticodon-bd_dom_sf"/>
</dbReference>
<dbReference type="InterPro" id="IPR015807">
    <property type="entry name" value="His-tRNA-ligase"/>
</dbReference>
<dbReference type="InterPro" id="IPR041715">
    <property type="entry name" value="HisRS-like_core"/>
</dbReference>
<dbReference type="InterPro" id="IPR004516">
    <property type="entry name" value="HisRS/HisZ"/>
</dbReference>
<dbReference type="NCBIfam" id="TIGR00442">
    <property type="entry name" value="hisS"/>
    <property type="match status" value="1"/>
</dbReference>
<dbReference type="PANTHER" id="PTHR43707:SF1">
    <property type="entry name" value="HISTIDINE--TRNA LIGASE, MITOCHONDRIAL-RELATED"/>
    <property type="match status" value="1"/>
</dbReference>
<dbReference type="PANTHER" id="PTHR43707">
    <property type="entry name" value="HISTIDYL-TRNA SYNTHETASE"/>
    <property type="match status" value="1"/>
</dbReference>
<dbReference type="Pfam" id="PF03129">
    <property type="entry name" value="HGTP_anticodon"/>
    <property type="match status" value="1"/>
</dbReference>
<dbReference type="Pfam" id="PF13393">
    <property type="entry name" value="tRNA-synt_His"/>
    <property type="match status" value="1"/>
</dbReference>
<dbReference type="PIRSF" id="PIRSF001549">
    <property type="entry name" value="His-tRNA_synth"/>
    <property type="match status" value="1"/>
</dbReference>
<dbReference type="SUPFAM" id="SSF52954">
    <property type="entry name" value="Class II aaRS ABD-related"/>
    <property type="match status" value="1"/>
</dbReference>
<dbReference type="SUPFAM" id="SSF55681">
    <property type="entry name" value="Class II aaRS and biotin synthetases"/>
    <property type="match status" value="1"/>
</dbReference>
<dbReference type="PROSITE" id="PS50862">
    <property type="entry name" value="AA_TRNA_LIGASE_II"/>
    <property type="match status" value="1"/>
</dbReference>
<keyword id="KW-0030">Aminoacyl-tRNA synthetase</keyword>
<keyword id="KW-0067">ATP-binding</keyword>
<keyword id="KW-0963">Cytoplasm</keyword>
<keyword id="KW-0436">Ligase</keyword>
<keyword id="KW-0547">Nucleotide-binding</keyword>
<keyword id="KW-0648">Protein biosynthesis</keyword>
<comment type="catalytic activity">
    <reaction evidence="1">
        <text>tRNA(His) + L-histidine + ATP = L-histidyl-tRNA(His) + AMP + diphosphate + H(+)</text>
        <dbReference type="Rhea" id="RHEA:17313"/>
        <dbReference type="Rhea" id="RHEA-COMP:9665"/>
        <dbReference type="Rhea" id="RHEA-COMP:9689"/>
        <dbReference type="ChEBI" id="CHEBI:15378"/>
        <dbReference type="ChEBI" id="CHEBI:30616"/>
        <dbReference type="ChEBI" id="CHEBI:33019"/>
        <dbReference type="ChEBI" id="CHEBI:57595"/>
        <dbReference type="ChEBI" id="CHEBI:78442"/>
        <dbReference type="ChEBI" id="CHEBI:78527"/>
        <dbReference type="ChEBI" id="CHEBI:456215"/>
        <dbReference type="EC" id="6.1.1.21"/>
    </reaction>
</comment>
<comment type="subunit">
    <text evidence="1">Homodimer.</text>
</comment>
<comment type="subcellular location">
    <subcellularLocation>
        <location evidence="1">Cytoplasm</location>
    </subcellularLocation>
</comment>
<comment type="similarity">
    <text evidence="1">Belongs to the class-II aminoacyl-tRNA synthetase family.</text>
</comment>
<feature type="chain" id="PRO_0000136090" description="Histidine--tRNA ligase">
    <location>
        <begin position="1"/>
        <end position="430"/>
    </location>
</feature>
<proteinExistence type="inferred from homology"/>
<reference key="1">
    <citation type="journal article" date="2005" name="Proc. Natl. Acad. Sci. U.S.A.">
        <title>Complete genome sequencing of Anaplasma marginale reveals that the surface is skewed to two superfamilies of outer membrane proteins.</title>
        <authorList>
            <person name="Brayton K.A."/>
            <person name="Kappmeyer L.S."/>
            <person name="Herndon D.R."/>
            <person name="Dark M.J."/>
            <person name="Tibbals D.L."/>
            <person name="Palmer G.H."/>
            <person name="McGuire T.C."/>
            <person name="Knowles D.P. Jr."/>
        </authorList>
    </citation>
    <scope>NUCLEOTIDE SEQUENCE [LARGE SCALE GENOMIC DNA]</scope>
    <source>
        <strain>St. Maries</strain>
    </source>
</reference>
<sequence>MNVGKLQPVRGTRDLLPEECYKFWHIRDVAHDIGERYGFVPVETPIFEFQDVFLKTLGDSSDIIGKEMYSFPDRGGDVLVLRPELTAAVARMLICERLTLPARLFTFGPVFRYERPQKCRQRQFHQINYEHFGAGCTADAELMALAYDILGALNLRSEVQLEINSLGNQDSILGYRNSLLKYFEKHEHALSEDSRRRLQTNPLRILDSKDRGDIAILCGAPVIADFYDDESNMTFNGVMQQLDNLGIPYTVNPRLVRGLDYYCGTVFEFKTTSLGSQDAVIAGGRYDKLVASMGGGDVPAVGFAGGVERLASLAAYSHSTRFSVAFLPLGEEAARCAMRSAYELRGRGIRVLCDGVVEKLKIGLKHADRSGVDLALILGDEEIAKGEVLCRHMDTGLQQTVSISNLGDYVSGMESNAQGNNRAALSSAGE</sequence>
<organism>
    <name type="scientific">Anaplasma marginale (strain St. Maries)</name>
    <dbReference type="NCBI Taxonomy" id="234826"/>
    <lineage>
        <taxon>Bacteria</taxon>
        <taxon>Pseudomonadati</taxon>
        <taxon>Pseudomonadota</taxon>
        <taxon>Alphaproteobacteria</taxon>
        <taxon>Rickettsiales</taxon>
        <taxon>Anaplasmataceae</taxon>
        <taxon>Anaplasma</taxon>
    </lineage>
</organism>
<protein>
    <recommendedName>
        <fullName evidence="1">Histidine--tRNA ligase</fullName>
        <ecNumber evidence="1">6.1.1.21</ecNumber>
    </recommendedName>
    <alternativeName>
        <fullName evidence="1">Histidyl-tRNA synthetase</fullName>
        <shortName evidence="1">HisRS</shortName>
    </alternativeName>
</protein>
<accession>Q5PBP9</accession>
<gene>
    <name evidence="1" type="primary">hisS</name>
    <name type="ordered locus">AM138</name>
</gene>
<evidence type="ECO:0000255" key="1">
    <source>
        <dbReference type="HAMAP-Rule" id="MF_00127"/>
    </source>
</evidence>
<name>SYH_ANAMM</name>